<accession>Q2ST57</accession>
<gene>
    <name evidence="1" type="primary">nfo</name>
    <name type="ordered locus">MCAP_0060</name>
</gene>
<comment type="function">
    <text evidence="1">Endonuclease IV plays a role in DNA repair. It cleaves phosphodiester bonds at apurinic or apyrimidinic (AP) sites, generating a 3'-hydroxyl group and a 5'-terminal sugar phosphate.</text>
</comment>
<comment type="catalytic activity">
    <reaction evidence="1">
        <text>Endonucleolytic cleavage to 5'-phosphooligonucleotide end-products.</text>
        <dbReference type="EC" id="3.1.21.2"/>
    </reaction>
</comment>
<comment type="cofactor">
    <cofactor evidence="1">
        <name>Zn(2+)</name>
        <dbReference type="ChEBI" id="CHEBI:29105"/>
    </cofactor>
    <text evidence="1">Binds 3 Zn(2+) ions.</text>
</comment>
<comment type="similarity">
    <text evidence="1">Belongs to the AP endonuclease 2 family.</text>
</comment>
<dbReference type="EC" id="3.1.21.2" evidence="1"/>
<dbReference type="EMBL" id="CP000123">
    <property type="protein sequence ID" value="ABC01147.1"/>
    <property type="molecule type" value="Genomic_DNA"/>
</dbReference>
<dbReference type="RefSeq" id="WP_011386961.1">
    <property type="nucleotide sequence ID" value="NC_007633.1"/>
</dbReference>
<dbReference type="SMR" id="Q2ST57"/>
<dbReference type="GeneID" id="23778985"/>
<dbReference type="KEGG" id="mcp:MCAP_0060"/>
<dbReference type="HOGENOM" id="CLU_025885_4_1_14"/>
<dbReference type="PhylomeDB" id="Q2ST57"/>
<dbReference type="Proteomes" id="UP000001928">
    <property type="component" value="Chromosome"/>
</dbReference>
<dbReference type="GO" id="GO:0008833">
    <property type="term" value="F:deoxyribonuclease IV (phage-T4-induced) activity"/>
    <property type="evidence" value="ECO:0007669"/>
    <property type="project" value="UniProtKB-UniRule"/>
</dbReference>
<dbReference type="GO" id="GO:0003677">
    <property type="term" value="F:DNA binding"/>
    <property type="evidence" value="ECO:0007669"/>
    <property type="project" value="InterPro"/>
</dbReference>
<dbReference type="GO" id="GO:0003906">
    <property type="term" value="F:DNA-(apurinic or apyrimidinic site) endonuclease activity"/>
    <property type="evidence" value="ECO:0007669"/>
    <property type="project" value="TreeGrafter"/>
</dbReference>
<dbReference type="GO" id="GO:0008081">
    <property type="term" value="F:phosphoric diester hydrolase activity"/>
    <property type="evidence" value="ECO:0007669"/>
    <property type="project" value="TreeGrafter"/>
</dbReference>
<dbReference type="GO" id="GO:0008270">
    <property type="term" value="F:zinc ion binding"/>
    <property type="evidence" value="ECO:0007669"/>
    <property type="project" value="UniProtKB-UniRule"/>
</dbReference>
<dbReference type="GO" id="GO:0006284">
    <property type="term" value="P:base-excision repair"/>
    <property type="evidence" value="ECO:0007669"/>
    <property type="project" value="TreeGrafter"/>
</dbReference>
<dbReference type="CDD" id="cd00019">
    <property type="entry name" value="AP2Ec"/>
    <property type="match status" value="1"/>
</dbReference>
<dbReference type="FunFam" id="3.20.20.150:FF:000001">
    <property type="entry name" value="Probable endonuclease 4"/>
    <property type="match status" value="1"/>
</dbReference>
<dbReference type="Gene3D" id="3.20.20.150">
    <property type="entry name" value="Divalent-metal-dependent TIM barrel enzymes"/>
    <property type="match status" value="1"/>
</dbReference>
<dbReference type="HAMAP" id="MF_00152">
    <property type="entry name" value="Nfo"/>
    <property type="match status" value="1"/>
</dbReference>
<dbReference type="InterPro" id="IPR001719">
    <property type="entry name" value="AP_endonuc_2"/>
</dbReference>
<dbReference type="InterPro" id="IPR018246">
    <property type="entry name" value="AP_endonuc_F2_Zn_BS"/>
</dbReference>
<dbReference type="InterPro" id="IPR036237">
    <property type="entry name" value="Xyl_isomerase-like_sf"/>
</dbReference>
<dbReference type="InterPro" id="IPR013022">
    <property type="entry name" value="Xyl_isomerase-like_TIM-brl"/>
</dbReference>
<dbReference type="NCBIfam" id="TIGR00587">
    <property type="entry name" value="nfo"/>
    <property type="match status" value="1"/>
</dbReference>
<dbReference type="NCBIfam" id="NF002196">
    <property type="entry name" value="PRK01060.1-1"/>
    <property type="match status" value="1"/>
</dbReference>
<dbReference type="PANTHER" id="PTHR21445:SF0">
    <property type="entry name" value="APURINIC-APYRIMIDINIC ENDONUCLEASE"/>
    <property type="match status" value="1"/>
</dbReference>
<dbReference type="PANTHER" id="PTHR21445">
    <property type="entry name" value="ENDONUCLEASE IV ENDODEOXYRIBONUCLEASE IV"/>
    <property type="match status" value="1"/>
</dbReference>
<dbReference type="Pfam" id="PF01261">
    <property type="entry name" value="AP_endonuc_2"/>
    <property type="match status" value="1"/>
</dbReference>
<dbReference type="SMART" id="SM00518">
    <property type="entry name" value="AP2Ec"/>
    <property type="match status" value="1"/>
</dbReference>
<dbReference type="SUPFAM" id="SSF51658">
    <property type="entry name" value="Xylose isomerase-like"/>
    <property type="match status" value="1"/>
</dbReference>
<dbReference type="PROSITE" id="PS00729">
    <property type="entry name" value="AP_NUCLEASE_F2_1"/>
    <property type="match status" value="1"/>
</dbReference>
<dbReference type="PROSITE" id="PS00730">
    <property type="entry name" value="AP_NUCLEASE_F2_2"/>
    <property type="match status" value="1"/>
</dbReference>
<dbReference type="PROSITE" id="PS51432">
    <property type="entry name" value="AP_NUCLEASE_F2_4"/>
    <property type="match status" value="1"/>
</dbReference>
<proteinExistence type="inferred from homology"/>
<feature type="chain" id="PRO_1000011319" description="Probable endonuclease 4">
    <location>
        <begin position="1"/>
        <end position="289"/>
    </location>
</feature>
<feature type="binding site" evidence="1">
    <location>
        <position position="74"/>
    </location>
    <ligand>
        <name>Zn(2+)</name>
        <dbReference type="ChEBI" id="CHEBI:29105"/>
        <label>1</label>
    </ligand>
</feature>
<feature type="binding site" evidence="1">
    <location>
        <position position="115"/>
    </location>
    <ligand>
        <name>Zn(2+)</name>
        <dbReference type="ChEBI" id="CHEBI:29105"/>
        <label>1</label>
    </ligand>
</feature>
<feature type="binding site" evidence="1">
    <location>
        <position position="150"/>
    </location>
    <ligand>
        <name>Zn(2+)</name>
        <dbReference type="ChEBI" id="CHEBI:29105"/>
        <label>1</label>
    </ligand>
</feature>
<feature type="binding site" evidence="1">
    <location>
        <position position="150"/>
    </location>
    <ligand>
        <name>Zn(2+)</name>
        <dbReference type="ChEBI" id="CHEBI:29105"/>
        <label>2</label>
    </ligand>
</feature>
<feature type="binding site" evidence="1">
    <location>
        <position position="184"/>
    </location>
    <ligand>
        <name>Zn(2+)</name>
        <dbReference type="ChEBI" id="CHEBI:29105"/>
        <label>2</label>
    </ligand>
</feature>
<feature type="binding site" evidence="1">
    <location>
        <position position="187"/>
    </location>
    <ligand>
        <name>Zn(2+)</name>
        <dbReference type="ChEBI" id="CHEBI:29105"/>
        <label>3</label>
    </ligand>
</feature>
<feature type="binding site" evidence="1">
    <location>
        <position position="218"/>
    </location>
    <ligand>
        <name>Zn(2+)</name>
        <dbReference type="ChEBI" id="CHEBI:29105"/>
        <label>2</label>
    </ligand>
</feature>
<feature type="binding site" evidence="1">
    <location>
        <position position="231"/>
    </location>
    <ligand>
        <name>Zn(2+)</name>
        <dbReference type="ChEBI" id="CHEBI:29105"/>
        <label>3</label>
    </ligand>
</feature>
<feature type="binding site" evidence="1">
    <location>
        <position position="233"/>
    </location>
    <ligand>
        <name>Zn(2+)</name>
        <dbReference type="ChEBI" id="CHEBI:29105"/>
        <label>3</label>
    </ligand>
</feature>
<feature type="binding site" evidence="1">
    <location>
        <position position="263"/>
    </location>
    <ligand>
        <name>Zn(2+)</name>
        <dbReference type="ChEBI" id="CHEBI:29105"/>
        <label>2</label>
    </ligand>
</feature>
<protein>
    <recommendedName>
        <fullName evidence="1">Probable endonuclease 4</fullName>
        <ecNumber evidence="1">3.1.21.2</ecNumber>
    </recommendedName>
    <alternativeName>
        <fullName evidence="1">Endodeoxyribonuclease IV</fullName>
    </alternativeName>
    <alternativeName>
        <fullName evidence="1">Endonuclease IV</fullName>
    </alternativeName>
</protein>
<sequence length="289" mass="33101">MDKVLLGCHVSMNKQNNYLVGSVNEAISYKANTFMIFTGPPQSTLRTNTNHLYINQMHELMNSYKIDAKDLVVHAPYIINIANSVDQNKWEFAVNFLIQEIKRCEEIKIPTLVLHPGSYTTGNYKDSLNQIIKALDMVSNYQVNVKIALETMSGKGTEVCSKLEDFKYILDNVKNKDKVGVCLDTCHLHDAGYDLSKWTEFKEQIKQNFNLDKVLCIHLNDSKNMISSHKDRHANIGYGFVGFDTLVNVVFDKDFSNISKILETPYIDKKAPYKIEIEDLLNKTFTNRL</sequence>
<reference key="1">
    <citation type="submission" date="2005-09" db="EMBL/GenBank/DDBJ databases">
        <authorList>
            <person name="Glass J.I."/>
            <person name="Lartigue C."/>
            <person name="Pfannkoch C."/>
            <person name="Baden-Tillson H."/>
            <person name="Smith H.O."/>
            <person name="Venter J.C."/>
            <person name="Roske K."/>
            <person name="Wise K.S."/>
            <person name="Calcutt M.J."/>
            <person name="Nelson W.C."/>
            <person name="Nierman W.C."/>
        </authorList>
    </citation>
    <scope>NUCLEOTIDE SEQUENCE [LARGE SCALE GENOMIC DNA]</scope>
    <source>
        <strain>California kid / ATCC 27343 / NCTC 10154</strain>
    </source>
</reference>
<keyword id="KW-0227">DNA damage</keyword>
<keyword id="KW-0234">DNA repair</keyword>
<keyword id="KW-0255">Endonuclease</keyword>
<keyword id="KW-0378">Hydrolase</keyword>
<keyword id="KW-0479">Metal-binding</keyword>
<keyword id="KW-0540">Nuclease</keyword>
<keyword id="KW-0862">Zinc</keyword>
<evidence type="ECO:0000255" key="1">
    <source>
        <dbReference type="HAMAP-Rule" id="MF_00152"/>
    </source>
</evidence>
<name>END4_MYCCT</name>
<organism>
    <name type="scientific">Mycoplasma capricolum subsp. capricolum (strain California kid / ATCC 27343 / NCTC 10154)</name>
    <dbReference type="NCBI Taxonomy" id="340047"/>
    <lineage>
        <taxon>Bacteria</taxon>
        <taxon>Bacillati</taxon>
        <taxon>Mycoplasmatota</taxon>
        <taxon>Mollicutes</taxon>
        <taxon>Mycoplasmataceae</taxon>
        <taxon>Mycoplasma</taxon>
    </lineage>
</organism>